<reference key="1">
    <citation type="journal article" date="1999" name="Nature">
        <title>Sequence and analysis of chromosome 2 of the plant Arabidopsis thaliana.</title>
        <authorList>
            <person name="Lin X."/>
            <person name="Kaul S."/>
            <person name="Rounsley S.D."/>
            <person name="Shea T.P."/>
            <person name="Benito M.-I."/>
            <person name="Town C.D."/>
            <person name="Fujii C.Y."/>
            <person name="Mason T.M."/>
            <person name="Bowman C.L."/>
            <person name="Barnstead M.E."/>
            <person name="Feldblyum T.V."/>
            <person name="Buell C.R."/>
            <person name="Ketchum K.A."/>
            <person name="Lee J.J."/>
            <person name="Ronning C.M."/>
            <person name="Koo H.L."/>
            <person name="Moffat K.S."/>
            <person name="Cronin L.A."/>
            <person name="Shen M."/>
            <person name="Pai G."/>
            <person name="Van Aken S."/>
            <person name="Umayam L."/>
            <person name="Tallon L.J."/>
            <person name="Gill J.E."/>
            <person name="Adams M.D."/>
            <person name="Carrera A.J."/>
            <person name="Creasy T.H."/>
            <person name="Goodman H.M."/>
            <person name="Somerville C.R."/>
            <person name="Copenhaver G.P."/>
            <person name="Preuss D."/>
            <person name="Nierman W.C."/>
            <person name="White O."/>
            <person name="Eisen J.A."/>
            <person name="Salzberg S.L."/>
            <person name="Fraser C.M."/>
            <person name="Venter J.C."/>
        </authorList>
    </citation>
    <scope>NUCLEOTIDE SEQUENCE [LARGE SCALE GENOMIC DNA]</scope>
    <source>
        <strain>cv. Columbia</strain>
    </source>
</reference>
<reference key="2">
    <citation type="journal article" date="2017" name="Plant J.">
        <title>Araport11: a complete reannotation of the Arabidopsis thaliana reference genome.</title>
        <authorList>
            <person name="Cheng C.Y."/>
            <person name="Krishnakumar V."/>
            <person name="Chan A.P."/>
            <person name="Thibaud-Nissen F."/>
            <person name="Schobel S."/>
            <person name="Town C.D."/>
        </authorList>
    </citation>
    <scope>GENOME REANNOTATION</scope>
    <source>
        <strain>cv. Columbia</strain>
    </source>
</reference>
<reference key="3">
    <citation type="journal article" date="2003" name="Science">
        <title>Empirical analysis of transcriptional activity in the Arabidopsis genome.</title>
        <authorList>
            <person name="Yamada K."/>
            <person name="Lim J."/>
            <person name="Dale J.M."/>
            <person name="Chen H."/>
            <person name="Shinn P."/>
            <person name="Palm C.J."/>
            <person name="Southwick A.M."/>
            <person name="Wu H.C."/>
            <person name="Kim C.J."/>
            <person name="Nguyen M."/>
            <person name="Pham P.K."/>
            <person name="Cheuk R.F."/>
            <person name="Karlin-Newmann G."/>
            <person name="Liu S.X."/>
            <person name="Lam B."/>
            <person name="Sakano H."/>
            <person name="Wu T."/>
            <person name="Yu G."/>
            <person name="Miranda M."/>
            <person name="Quach H.L."/>
            <person name="Tripp M."/>
            <person name="Chang C.H."/>
            <person name="Lee J.M."/>
            <person name="Toriumi M.J."/>
            <person name="Chan M.M."/>
            <person name="Tang C.C."/>
            <person name="Onodera C.S."/>
            <person name="Deng J.M."/>
            <person name="Akiyama K."/>
            <person name="Ansari Y."/>
            <person name="Arakawa T."/>
            <person name="Banh J."/>
            <person name="Banno F."/>
            <person name="Bowser L."/>
            <person name="Brooks S.Y."/>
            <person name="Carninci P."/>
            <person name="Chao Q."/>
            <person name="Choy N."/>
            <person name="Enju A."/>
            <person name="Goldsmith A.D."/>
            <person name="Gurjal M."/>
            <person name="Hansen N.F."/>
            <person name="Hayashizaki Y."/>
            <person name="Johnson-Hopson C."/>
            <person name="Hsuan V.W."/>
            <person name="Iida K."/>
            <person name="Karnes M."/>
            <person name="Khan S."/>
            <person name="Koesema E."/>
            <person name="Ishida J."/>
            <person name="Jiang P.X."/>
            <person name="Jones T."/>
            <person name="Kawai J."/>
            <person name="Kamiya A."/>
            <person name="Meyers C."/>
            <person name="Nakajima M."/>
            <person name="Narusaka M."/>
            <person name="Seki M."/>
            <person name="Sakurai T."/>
            <person name="Satou M."/>
            <person name="Tamse R."/>
            <person name="Vaysberg M."/>
            <person name="Wallender E.K."/>
            <person name="Wong C."/>
            <person name="Yamamura Y."/>
            <person name="Yuan S."/>
            <person name="Shinozaki K."/>
            <person name="Davis R.W."/>
            <person name="Theologis A."/>
            <person name="Ecker J.R."/>
        </authorList>
    </citation>
    <scope>NUCLEOTIDE SEQUENCE [LARGE SCALE MRNA]</scope>
    <source>
        <strain>cv. Columbia</strain>
    </source>
</reference>
<reference key="4">
    <citation type="submission" date="2006-07" db="EMBL/GenBank/DDBJ databases">
        <title>Large-scale analysis of RIKEN Arabidopsis full-length (RAFL) cDNAs.</title>
        <authorList>
            <person name="Totoki Y."/>
            <person name="Seki M."/>
            <person name="Ishida J."/>
            <person name="Nakajima M."/>
            <person name="Enju A."/>
            <person name="Kamiya A."/>
            <person name="Narusaka M."/>
            <person name="Shin-i T."/>
            <person name="Nakagawa M."/>
            <person name="Sakamoto N."/>
            <person name="Oishi K."/>
            <person name="Kohara Y."/>
            <person name="Kobayashi M."/>
            <person name="Toyoda A."/>
            <person name="Sakaki Y."/>
            <person name="Sakurai T."/>
            <person name="Iida K."/>
            <person name="Akiyama K."/>
            <person name="Satou M."/>
            <person name="Toyoda T."/>
            <person name="Konagaya A."/>
            <person name="Carninci P."/>
            <person name="Kawai J."/>
            <person name="Hayashizaki Y."/>
            <person name="Shinozaki K."/>
        </authorList>
    </citation>
    <scope>NUCLEOTIDE SEQUENCE [LARGE SCALE MRNA]</scope>
    <source>
        <strain>cv. Columbia</strain>
    </source>
</reference>
<reference key="5">
    <citation type="journal article" date="2001" name="Trends Plant Sci.">
        <title>The U-box protein family in plants.</title>
        <authorList>
            <person name="Azevedo C."/>
            <person name="Santos-Rosa M.J."/>
            <person name="Shirasu K."/>
        </authorList>
    </citation>
    <scope>GENE FAMILY ORGANIZATION</scope>
    <scope>NOMENCLATURE</scope>
</reference>
<reference key="6">
    <citation type="journal article" date="2004" name="Plant Physiol.">
        <title>A large complement of the predicted Arabidopsis ARM repeat proteins are members of the U-box E3 ubiquitin ligase family.</title>
        <authorList>
            <person name="Mudgil Y."/>
            <person name="Shiu S.-H."/>
            <person name="Stone S.L."/>
            <person name="Salt J.N."/>
            <person name="Goring D.R."/>
        </authorList>
    </citation>
    <scope>GENE FAMILY ORGANIZATION</scope>
</reference>
<reference key="7">
    <citation type="journal article" date="2008" name="Curr. Biol.">
        <title>Negative regulation of PAMP-triggered immunity by an E3 ubiquitin ligase triplet in Arabidopsis.</title>
        <authorList>
            <person name="Trujillo M."/>
            <person name="Ichimura K."/>
            <person name="Casais C."/>
            <person name="Shirasu K."/>
        </authorList>
    </citation>
    <scope>FUNCTION</scope>
    <scope>AUTOUBIQUITINATION</scope>
    <scope>INDUCTION</scope>
    <scope>MUTAGENESIS OF CYS-18 AND TRP-45</scope>
</reference>
<reference key="8">
    <citation type="journal article" date="2008" name="Plant Cell">
        <title>Arabidopsis PUB22 and PUB23 are homologous U-Box E3 ubiquitin ligases that play combinatory roles in response to drought stress.</title>
        <authorList>
            <person name="Cho S.K."/>
            <person name="Ryu M.Y."/>
            <person name="Song C."/>
            <person name="Kwak J.M."/>
            <person name="Kim W.T."/>
        </authorList>
    </citation>
    <scope>FUNCTION</scope>
    <scope>INTERACTION WITH RPN12A</scope>
    <scope>SUBCELLULAR LOCATION</scope>
    <scope>INDUCTION</scope>
    <scope>AUTOUBIQUITINATION</scope>
    <scope>DISRUPTION PHENOTYPE</scope>
</reference>
<sequence>MSGGIMDEEIEIPPFFLCPISLEIMKDPVIVSTGITYDRDSIEKWLFAGKKNSCPVTKQDITDADLTPNHTLRRLIQSWCTLNASYGVERIPTPRPPICKSEIEKLIRDSASSHENQVKCLKRLRQIVSENATNKRCLEAAGVPEFLANIVSNDSENGSLTDEALNLLYHLETSETVLKNLLNNKKDNNIVKSLTKIMQRGMYESRVYATLLLKNILEVADPMQSMTLKPEVFTEVVQILDDRISQKATKAAMHILVNICPWGRNRHKAVEAGVISVIIELLMDESFTSERRGPEMAMVVLDLLCQCAEGRAEFLNHGAAIAVVCKKILRVSQTASDRAVRVLLSVGRFCATPALLHEMLQLGVVAKLCLVLQVSCGGKTKEKAKELLKLHARVWKDSPCLPKNMILAYPC</sequence>
<keyword id="KW-0963">Cytoplasm</keyword>
<keyword id="KW-0611">Plant defense</keyword>
<keyword id="KW-1185">Reference proteome</keyword>
<keyword id="KW-0677">Repeat</keyword>
<keyword id="KW-0808">Transferase</keyword>
<keyword id="KW-0832">Ubl conjugation</keyword>
<keyword id="KW-0833">Ubl conjugation pathway</keyword>
<name>PUB23_ARATH</name>
<feature type="chain" id="PRO_0000322167" description="E3 ubiquitin-protein ligase PUB23">
    <location>
        <begin position="1"/>
        <end position="411"/>
    </location>
</feature>
<feature type="domain" description="U-box">
    <location>
        <begin position="11"/>
        <end position="86"/>
    </location>
</feature>
<feature type="repeat" description="ARM 1">
    <location>
        <begin position="132"/>
        <end position="173"/>
    </location>
</feature>
<feature type="repeat" description="ARM 2">
    <location>
        <begin position="175"/>
        <end position="203"/>
    </location>
</feature>
<feature type="repeat" description="ARM 3">
    <location>
        <begin position="221"/>
        <end position="261"/>
    </location>
</feature>
<feature type="repeat" description="ARM 4">
    <location>
        <begin position="263"/>
        <end position="306"/>
    </location>
</feature>
<feature type="mutagenesis site" description="Loss of autoubiquitination." evidence="2">
    <original>C</original>
    <variation>A</variation>
    <location>
        <position position="18"/>
    </location>
</feature>
<feature type="mutagenesis site" description="Loss of autoubiquitination." evidence="2">
    <original>W</original>
    <variation>A</variation>
    <location>
        <position position="45"/>
    </location>
</feature>
<evidence type="ECO:0000269" key="1">
    <source>
    </source>
</evidence>
<evidence type="ECO:0000269" key="2">
    <source>
    </source>
</evidence>
<evidence type="ECO:0000305" key="3"/>
<comment type="function">
    <text evidence="1 2">E3 ubiquitin-protein ligase that negatively regulates water stress response. May control in coordination with PUB23 a drought signaling pathway by ubiquitinating cytosolic RPN12a. Acts as a negative regulator of the immunity triggered by the pathogen-associated molecular patterns (PAMPs), in association with PUB22 and PUB24.</text>
</comment>
<comment type="catalytic activity">
    <reaction>
        <text>S-ubiquitinyl-[E2 ubiquitin-conjugating enzyme]-L-cysteine + [acceptor protein]-L-lysine = [E2 ubiquitin-conjugating enzyme]-L-cysteine + N(6)-ubiquitinyl-[acceptor protein]-L-lysine.</text>
        <dbReference type="EC" id="2.3.2.27"/>
    </reaction>
</comment>
<comment type="pathway">
    <text>Protein modification; protein ubiquitination.</text>
</comment>
<comment type="subunit">
    <text evidence="1">Interacts with RPN12A.</text>
</comment>
<comment type="subcellular location">
    <subcellularLocation>
        <location evidence="1">Cytoplasm</location>
    </subcellularLocation>
</comment>
<comment type="induction">
    <text evidence="1 2">By cold, drought and salt stresses, bacterial elicitor flg22, and bacterial and oomycete pathogens.</text>
</comment>
<comment type="PTM">
    <text evidence="1 2">Auto-ubiquitinated.</text>
</comment>
<comment type="disruption phenotype">
    <text evidence="1">Increased tolerance to drought stress.</text>
</comment>
<comment type="sequence caution" evidence="3">
    <conflict type="erroneous initiation">
        <sequence resource="EMBL-CDS" id="AAD21464"/>
    </conflict>
</comment>
<gene>
    <name type="primary">PUB23</name>
    <name type="ordered locus">At2g35930</name>
    <name type="ORF">F11F19.16</name>
</gene>
<proteinExistence type="evidence at protein level"/>
<dbReference type="EC" id="2.3.2.27"/>
<dbReference type="EMBL" id="AC007017">
    <property type="protein sequence ID" value="AAD21464.1"/>
    <property type="status" value="ALT_INIT"/>
    <property type="molecule type" value="Genomic_DNA"/>
</dbReference>
<dbReference type="EMBL" id="CP002685">
    <property type="protein sequence ID" value="AEC09178.1"/>
    <property type="molecule type" value="Genomic_DNA"/>
</dbReference>
<dbReference type="EMBL" id="BT005829">
    <property type="protein sequence ID" value="AAO64764.1"/>
    <property type="molecule type" value="mRNA"/>
</dbReference>
<dbReference type="EMBL" id="AK227343">
    <property type="protein sequence ID" value="BAE99354.1"/>
    <property type="molecule type" value="mRNA"/>
</dbReference>
<dbReference type="PIR" id="G84774">
    <property type="entry name" value="G84774"/>
</dbReference>
<dbReference type="RefSeq" id="NP_181137.2">
    <property type="nucleotide sequence ID" value="NM_129152.3"/>
</dbReference>
<dbReference type="SMR" id="Q84TG3"/>
<dbReference type="BioGRID" id="3510">
    <property type="interactions" value="6"/>
</dbReference>
<dbReference type="FunCoup" id="Q84TG3">
    <property type="interactions" value="37"/>
</dbReference>
<dbReference type="IntAct" id="Q84TG3">
    <property type="interactions" value="1"/>
</dbReference>
<dbReference type="STRING" id="3702.Q84TG3"/>
<dbReference type="PaxDb" id="3702-AT2G35930.1"/>
<dbReference type="EnsemblPlants" id="AT2G35930.1">
    <property type="protein sequence ID" value="AT2G35930.1"/>
    <property type="gene ID" value="AT2G35930"/>
</dbReference>
<dbReference type="GeneID" id="818166"/>
<dbReference type="Gramene" id="AT2G35930.1">
    <property type="protein sequence ID" value="AT2G35930.1"/>
    <property type="gene ID" value="AT2G35930"/>
</dbReference>
<dbReference type="KEGG" id="ath:AT2G35930"/>
<dbReference type="Araport" id="AT2G35930"/>
<dbReference type="TAIR" id="AT2G35930">
    <property type="gene designation" value="PUB23"/>
</dbReference>
<dbReference type="eggNOG" id="ENOG502QR1A">
    <property type="taxonomic scope" value="Eukaryota"/>
</dbReference>
<dbReference type="HOGENOM" id="CLU_006348_1_1_1"/>
<dbReference type="InParanoid" id="Q84TG3"/>
<dbReference type="OMA" id="MILAYPC"/>
<dbReference type="OrthoDB" id="10064100at2759"/>
<dbReference type="PhylomeDB" id="Q84TG3"/>
<dbReference type="UniPathway" id="UPA00143"/>
<dbReference type="PRO" id="PR:Q84TG3"/>
<dbReference type="Proteomes" id="UP000006548">
    <property type="component" value="Chromosome 2"/>
</dbReference>
<dbReference type="ExpressionAtlas" id="Q84TG3">
    <property type="expression patterns" value="baseline and differential"/>
</dbReference>
<dbReference type="GO" id="GO:0005829">
    <property type="term" value="C:cytosol"/>
    <property type="evidence" value="ECO:0000314"/>
    <property type="project" value="TAIR"/>
</dbReference>
<dbReference type="GO" id="GO:0061630">
    <property type="term" value="F:ubiquitin protein ligase activity"/>
    <property type="evidence" value="ECO:0007669"/>
    <property type="project" value="InterPro"/>
</dbReference>
<dbReference type="GO" id="GO:0004842">
    <property type="term" value="F:ubiquitin-protein transferase activity"/>
    <property type="evidence" value="ECO:0000314"/>
    <property type="project" value="UniProtKB"/>
</dbReference>
<dbReference type="GO" id="GO:0006952">
    <property type="term" value="P:defense response"/>
    <property type="evidence" value="ECO:0000316"/>
    <property type="project" value="TAIR"/>
</dbReference>
<dbReference type="GO" id="GO:0051865">
    <property type="term" value="P:protein autoubiquitination"/>
    <property type="evidence" value="ECO:0000314"/>
    <property type="project" value="TAIR"/>
</dbReference>
<dbReference type="GO" id="GO:0016567">
    <property type="term" value="P:protein ubiquitination"/>
    <property type="evidence" value="ECO:0000314"/>
    <property type="project" value="TAIR"/>
</dbReference>
<dbReference type="GO" id="GO:0002679">
    <property type="term" value="P:respiratory burst involved in defense response"/>
    <property type="evidence" value="ECO:0000316"/>
    <property type="project" value="TAIR"/>
</dbReference>
<dbReference type="GO" id="GO:0009414">
    <property type="term" value="P:response to water deprivation"/>
    <property type="evidence" value="ECO:0000315"/>
    <property type="project" value="TAIR"/>
</dbReference>
<dbReference type="CDD" id="cd16664">
    <property type="entry name" value="RING-Ubox_PUB"/>
    <property type="match status" value="1"/>
</dbReference>
<dbReference type="FunFam" id="1.25.10.10:FF:000529">
    <property type="entry name" value="RING-type E3 ubiquitin transferase"/>
    <property type="match status" value="1"/>
</dbReference>
<dbReference type="FunFam" id="3.30.40.10:FF:000437">
    <property type="entry name" value="RING-type E3 ubiquitin transferase"/>
    <property type="match status" value="1"/>
</dbReference>
<dbReference type="Gene3D" id="1.25.10.10">
    <property type="entry name" value="Leucine-rich Repeat Variant"/>
    <property type="match status" value="1"/>
</dbReference>
<dbReference type="Gene3D" id="3.30.40.10">
    <property type="entry name" value="Zinc/RING finger domain, C3HC4 (zinc finger)"/>
    <property type="match status" value="1"/>
</dbReference>
<dbReference type="InterPro" id="IPR011989">
    <property type="entry name" value="ARM-like"/>
</dbReference>
<dbReference type="InterPro" id="IPR016024">
    <property type="entry name" value="ARM-type_fold"/>
</dbReference>
<dbReference type="InterPro" id="IPR045185">
    <property type="entry name" value="PUB22/23/24-like"/>
</dbReference>
<dbReference type="InterPro" id="IPR045210">
    <property type="entry name" value="RING-Ubox_PUB"/>
</dbReference>
<dbReference type="InterPro" id="IPR003613">
    <property type="entry name" value="Ubox_domain"/>
</dbReference>
<dbReference type="InterPro" id="IPR013083">
    <property type="entry name" value="Znf_RING/FYVE/PHD"/>
</dbReference>
<dbReference type="PANTHER" id="PTHR22849:SF132">
    <property type="entry name" value="E3 UBIQUITIN-PROTEIN LIGASE PUB23"/>
    <property type="match status" value="1"/>
</dbReference>
<dbReference type="PANTHER" id="PTHR22849">
    <property type="entry name" value="WDSAM1 PROTEIN"/>
    <property type="match status" value="1"/>
</dbReference>
<dbReference type="Pfam" id="PF04564">
    <property type="entry name" value="U-box"/>
    <property type="match status" value="1"/>
</dbReference>
<dbReference type="SMART" id="SM00504">
    <property type="entry name" value="Ubox"/>
    <property type="match status" value="1"/>
</dbReference>
<dbReference type="SUPFAM" id="SSF48371">
    <property type="entry name" value="ARM repeat"/>
    <property type="match status" value="1"/>
</dbReference>
<dbReference type="SUPFAM" id="SSF57850">
    <property type="entry name" value="RING/U-box"/>
    <property type="match status" value="1"/>
</dbReference>
<dbReference type="PROSITE" id="PS51698">
    <property type="entry name" value="U_BOX"/>
    <property type="match status" value="1"/>
</dbReference>
<accession>Q84TG3</accession>
<accession>Q9SJ57</accession>
<organism>
    <name type="scientific">Arabidopsis thaliana</name>
    <name type="common">Mouse-ear cress</name>
    <dbReference type="NCBI Taxonomy" id="3702"/>
    <lineage>
        <taxon>Eukaryota</taxon>
        <taxon>Viridiplantae</taxon>
        <taxon>Streptophyta</taxon>
        <taxon>Embryophyta</taxon>
        <taxon>Tracheophyta</taxon>
        <taxon>Spermatophyta</taxon>
        <taxon>Magnoliopsida</taxon>
        <taxon>eudicotyledons</taxon>
        <taxon>Gunneridae</taxon>
        <taxon>Pentapetalae</taxon>
        <taxon>rosids</taxon>
        <taxon>malvids</taxon>
        <taxon>Brassicales</taxon>
        <taxon>Brassicaceae</taxon>
        <taxon>Camelineae</taxon>
        <taxon>Arabidopsis</taxon>
    </lineage>
</organism>
<protein>
    <recommendedName>
        <fullName>E3 ubiquitin-protein ligase PUB23</fullName>
        <ecNumber>2.3.2.27</ecNumber>
    </recommendedName>
    <alternativeName>
        <fullName>Plant U-box protein 23</fullName>
    </alternativeName>
    <alternativeName>
        <fullName evidence="3">RING-type E3 ubiquitin transferase PUB23</fullName>
    </alternativeName>
    <alternativeName>
        <fullName>U-box domain-containing protein 23</fullName>
    </alternativeName>
</protein>